<sequence length="469" mass="51053">MSGGTPYIGSKISLISKAEIRYEGILYTIDTENSTVALAKVRSFGTEDRPTDRPIPPRDEVFEYIIFRGSDIKDLTVCEPPKPQCSLPQDPAIVQSSLGSSSASSFQSVSSYGPFGRMPTYSQFSTSPLVGQQFGAVGSSLTSFGAETTSSTSLPPSSTVGSSFTQEARTLKTQLSQGRSTSPLDSLRKSPTIEQAVQTASASHAPSAAPVGRRSPVLSRPLPSSSQKTGESSEQRKGELHKTQRPDTEQLRNDNRHDPNKRQPASSAPQPRRGRGGNRGGRGRFGVRRDGPMKFEKDFDFESANAQFNKEEIDREFHNKLKLKDDKPEKPVNGEDKTDSGVDTQNSEGNAEEDDVLAGGVCYYDKTKSFFDNISCDDNRDRRQTWSEERRINAETFGLPLRSNRGRGGFRGRGGGMGFRGGRGRGERRGPPGGGGFGSSRGYRGGSRGGRGGREFAEYEYRKDNKVAA</sequence>
<dbReference type="EMBL" id="BC067936">
    <property type="protein sequence ID" value="AAH67936.1"/>
    <property type="molecule type" value="mRNA"/>
</dbReference>
<dbReference type="RefSeq" id="NP_998832.1">
    <property type="nucleotide sequence ID" value="NM_213667.1"/>
</dbReference>
<dbReference type="BMRB" id="Q6NVR8"/>
<dbReference type="SMR" id="Q6NVR8"/>
<dbReference type="FunCoup" id="Q6NVR8">
    <property type="interactions" value="3133"/>
</dbReference>
<dbReference type="STRING" id="8364.ENSXETP00000025447"/>
<dbReference type="PaxDb" id="8364-ENSXETP00000005025"/>
<dbReference type="DNASU" id="407942"/>
<dbReference type="GeneID" id="407942"/>
<dbReference type="KEGG" id="xtr:407942"/>
<dbReference type="AGR" id="Xenbase:XB-GENE-5955547"/>
<dbReference type="CTD" id="26065"/>
<dbReference type="Xenbase" id="XB-GENE-5955547">
    <property type="gene designation" value="lsm14a"/>
</dbReference>
<dbReference type="eggNOG" id="KOG1073">
    <property type="taxonomic scope" value="Eukaryota"/>
</dbReference>
<dbReference type="HOGENOM" id="CLU_019221_0_1_1"/>
<dbReference type="InParanoid" id="Q6NVR8"/>
<dbReference type="OrthoDB" id="21539at2759"/>
<dbReference type="Proteomes" id="UP000008143">
    <property type="component" value="Chromosome 4"/>
</dbReference>
<dbReference type="GO" id="GO:0005737">
    <property type="term" value="C:cytoplasm"/>
    <property type="evidence" value="ECO:0000250"/>
    <property type="project" value="UniProtKB"/>
</dbReference>
<dbReference type="GO" id="GO:0010494">
    <property type="term" value="C:cytoplasmic stress granule"/>
    <property type="evidence" value="ECO:0007669"/>
    <property type="project" value="UniProtKB-SubCell"/>
</dbReference>
<dbReference type="GO" id="GO:0000932">
    <property type="term" value="C:P-body"/>
    <property type="evidence" value="ECO:0007669"/>
    <property type="project" value="UniProtKB-SubCell"/>
</dbReference>
<dbReference type="GO" id="GO:1990904">
    <property type="term" value="C:ribonucleoprotein complex"/>
    <property type="evidence" value="ECO:0000250"/>
    <property type="project" value="UniProtKB"/>
</dbReference>
<dbReference type="GO" id="GO:0017151">
    <property type="term" value="F:DEAD/H-box RNA helicase binding"/>
    <property type="evidence" value="ECO:0000250"/>
    <property type="project" value="UniProtKB"/>
</dbReference>
<dbReference type="GO" id="GO:0003723">
    <property type="term" value="F:RNA binding"/>
    <property type="evidence" value="ECO:0000250"/>
    <property type="project" value="UniProtKB"/>
</dbReference>
<dbReference type="GO" id="GO:0017148">
    <property type="term" value="P:negative regulation of translation"/>
    <property type="evidence" value="ECO:0000250"/>
    <property type="project" value="UniProtKB"/>
</dbReference>
<dbReference type="CDD" id="cd01736">
    <property type="entry name" value="LSm14_N"/>
    <property type="match status" value="1"/>
</dbReference>
<dbReference type="FunFam" id="2.30.30.100:FF:000006">
    <property type="entry name" value="Protein LSM14 homolog A isoform b"/>
    <property type="match status" value="1"/>
</dbReference>
<dbReference type="Gene3D" id="2.30.30.100">
    <property type="match status" value="1"/>
</dbReference>
<dbReference type="InterPro" id="IPR025762">
    <property type="entry name" value="DFDF"/>
</dbReference>
<dbReference type="InterPro" id="IPR019050">
    <property type="entry name" value="FDF_dom"/>
</dbReference>
<dbReference type="InterPro" id="IPR025761">
    <property type="entry name" value="FFD_box"/>
</dbReference>
<dbReference type="InterPro" id="IPR025609">
    <property type="entry name" value="Lsm14-like_N"/>
</dbReference>
<dbReference type="InterPro" id="IPR010920">
    <property type="entry name" value="LSM_dom_sf"/>
</dbReference>
<dbReference type="InterPro" id="IPR047575">
    <property type="entry name" value="Sm"/>
</dbReference>
<dbReference type="InterPro" id="IPR025768">
    <property type="entry name" value="TFG_box"/>
</dbReference>
<dbReference type="PANTHER" id="PTHR13586:SF2">
    <property type="entry name" value="PROTEIN LSM14 HOMOLOG A"/>
    <property type="match status" value="1"/>
</dbReference>
<dbReference type="PANTHER" id="PTHR13586">
    <property type="entry name" value="SCD6 PROTEIN-RELATED"/>
    <property type="match status" value="1"/>
</dbReference>
<dbReference type="Pfam" id="PF09532">
    <property type="entry name" value="FDF"/>
    <property type="match status" value="1"/>
</dbReference>
<dbReference type="Pfam" id="PF12701">
    <property type="entry name" value="LSM14"/>
    <property type="match status" value="1"/>
</dbReference>
<dbReference type="SMART" id="SM01199">
    <property type="entry name" value="FDF"/>
    <property type="match status" value="1"/>
</dbReference>
<dbReference type="SMART" id="SM01271">
    <property type="entry name" value="LSM14"/>
    <property type="match status" value="1"/>
</dbReference>
<dbReference type="SUPFAM" id="SSF50182">
    <property type="entry name" value="Sm-like ribonucleoproteins"/>
    <property type="match status" value="1"/>
</dbReference>
<dbReference type="PROSITE" id="PS51512">
    <property type="entry name" value="DFDF"/>
    <property type="match status" value="1"/>
</dbReference>
<dbReference type="PROSITE" id="PS51513">
    <property type="entry name" value="FFD"/>
    <property type="match status" value="1"/>
</dbReference>
<dbReference type="PROSITE" id="PS52002">
    <property type="entry name" value="SM"/>
    <property type="match status" value="1"/>
</dbReference>
<dbReference type="PROSITE" id="PS51536">
    <property type="entry name" value="TFG"/>
    <property type="match status" value="1"/>
</dbReference>
<gene>
    <name evidence="7" type="primary">lsm14a</name>
    <name evidence="1" type="synonym">rap55a</name>
</gene>
<organism>
    <name type="scientific">Xenopus tropicalis</name>
    <name type="common">Western clawed frog</name>
    <name type="synonym">Silurana tropicalis</name>
    <dbReference type="NCBI Taxonomy" id="8364"/>
    <lineage>
        <taxon>Eukaryota</taxon>
        <taxon>Metazoa</taxon>
        <taxon>Chordata</taxon>
        <taxon>Craniata</taxon>
        <taxon>Vertebrata</taxon>
        <taxon>Euteleostomi</taxon>
        <taxon>Amphibia</taxon>
        <taxon>Batrachia</taxon>
        <taxon>Anura</taxon>
        <taxon>Pipoidea</taxon>
        <taxon>Pipidae</taxon>
        <taxon>Xenopodinae</taxon>
        <taxon>Xenopus</taxon>
        <taxon>Silurana</taxon>
    </lineage>
</organism>
<evidence type="ECO:0000250" key="1">
    <source>
        <dbReference type="UniProtKB" id="A0A8M2"/>
    </source>
</evidence>
<evidence type="ECO:0000250" key="2">
    <source>
        <dbReference type="UniProtKB" id="Q8ND56"/>
    </source>
</evidence>
<evidence type="ECO:0000255" key="3"/>
<evidence type="ECO:0000255" key="4">
    <source>
        <dbReference type="PROSITE-ProRule" id="PRU00845"/>
    </source>
</evidence>
<evidence type="ECO:0000255" key="5">
    <source>
        <dbReference type="PROSITE-ProRule" id="PRU01346"/>
    </source>
</evidence>
<evidence type="ECO:0000256" key="6">
    <source>
        <dbReference type="SAM" id="MobiDB-lite"/>
    </source>
</evidence>
<evidence type="ECO:0000312" key="7">
    <source>
        <dbReference type="EMBL" id="AAH67936.1"/>
    </source>
</evidence>
<keyword id="KW-0963">Cytoplasm</keyword>
<keyword id="KW-0217">Developmental protein</keyword>
<keyword id="KW-0597">Phosphoprotein</keyword>
<keyword id="KW-1185">Reference proteome</keyword>
<keyword id="KW-0678">Repressor</keyword>
<keyword id="KW-0687">Ribonucleoprotein</keyword>
<keyword id="KW-0810">Translation regulation</keyword>
<feature type="chain" id="PRO_0000391380" description="Protein LSM14 homolog A">
    <location>
        <begin position="1"/>
        <end position="469"/>
    </location>
</feature>
<feature type="domain" description="Sm" evidence="5">
    <location>
        <begin position="1"/>
        <end position="81"/>
    </location>
</feature>
<feature type="domain" description="DFDF" evidence="4">
    <location>
        <begin position="287"/>
        <end position="323"/>
    </location>
</feature>
<feature type="region of interest" description="Disordered" evidence="6">
    <location>
        <begin position="144"/>
        <end position="357"/>
    </location>
</feature>
<feature type="region of interest" description="Disordered" evidence="6">
    <location>
        <begin position="374"/>
        <end position="469"/>
    </location>
</feature>
<feature type="short sequence motif" description="FFD box">
    <location>
        <begin position="362"/>
        <end position="378"/>
    </location>
</feature>
<feature type="short sequence motif" description="TFG box">
    <location>
        <begin position="381"/>
        <end position="401"/>
    </location>
</feature>
<feature type="compositionally biased region" description="Low complexity" evidence="6">
    <location>
        <begin position="148"/>
        <end position="163"/>
    </location>
</feature>
<feature type="compositionally biased region" description="Polar residues" evidence="6">
    <location>
        <begin position="164"/>
        <end position="184"/>
    </location>
</feature>
<feature type="compositionally biased region" description="Low complexity" evidence="6">
    <location>
        <begin position="200"/>
        <end position="226"/>
    </location>
</feature>
<feature type="compositionally biased region" description="Basic and acidic residues" evidence="6">
    <location>
        <begin position="231"/>
        <end position="261"/>
    </location>
</feature>
<feature type="compositionally biased region" description="Basic residues" evidence="6">
    <location>
        <begin position="272"/>
        <end position="286"/>
    </location>
</feature>
<feature type="compositionally biased region" description="Basic and acidic residues" evidence="6">
    <location>
        <begin position="287"/>
        <end position="300"/>
    </location>
</feature>
<feature type="compositionally biased region" description="Basic and acidic residues" evidence="6">
    <location>
        <begin position="309"/>
        <end position="340"/>
    </location>
</feature>
<feature type="compositionally biased region" description="Basic and acidic residues" evidence="6">
    <location>
        <begin position="377"/>
        <end position="393"/>
    </location>
</feature>
<feature type="compositionally biased region" description="Gly residues" evidence="6">
    <location>
        <begin position="411"/>
        <end position="421"/>
    </location>
</feature>
<feature type="compositionally biased region" description="Gly residues" evidence="6">
    <location>
        <begin position="431"/>
        <end position="450"/>
    </location>
</feature>
<feature type="compositionally biased region" description="Basic and acidic residues" evidence="6">
    <location>
        <begin position="452"/>
        <end position="469"/>
    </location>
</feature>
<proteinExistence type="evidence at transcript level"/>
<protein>
    <recommendedName>
        <fullName evidence="2">Protein LSM14 homolog A</fullName>
    </recommendedName>
    <alternativeName>
        <fullName evidence="1">RNA-associated protein 55A</fullName>
        <shortName evidence="1">RAP55A</shortName>
    </alternativeName>
</protein>
<name>LS14A_XENTR</name>
<accession>Q6NVR8</accession>
<reference evidence="7" key="1">
    <citation type="submission" date="2004-03" db="EMBL/GenBank/DDBJ databases">
        <authorList>
            <consortium name="NIH - Xenopus Gene Collection (XGC) project"/>
        </authorList>
    </citation>
    <scope>NUCLEOTIDE SEQUENCE [LARGE SCALE MRNA]</scope>
    <source>
        <tissue evidence="7">Gastrula</tissue>
    </source>
</reference>
<comment type="function">
    <text evidence="1">RNA-binding component of messenger ribonucleoprotein complexes (mRNPs), storage particles that mask maternal mRNAs from the translational apparatus during oocyte maturation. Acts as a repressor of mRNA translation. Probably involved in the storage of translationally inactive mRNAs in the cytoplasm in order to prevent their degradation.</text>
</comment>
<comment type="subunit">
    <text evidence="1">Component of a ribonucleoprotein (RNP) complex, at least composed of lsm14a/rap55a, ybx2/frgy2, ddx6/Xp54 and eif4enif1/4E-T. Also forms a complex with prmt1 independently of ybx2/frgy2. Interacts with ddx6/Xp54 but does not appear to directly bind ybx2/frgy2. Different translationally-repressed mRNP complexes probably exist that contain either lsm14a/rap55a or lsm14b/rap55b depending on the developmental stage (By similarity).</text>
</comment>
<comment type="subcellular location">
    <subcellularLocation>
        <location evidence="2">Cytoplasm</location>
        <location evidence="2">P-body</location>
    </subcellularLocation>
    <subcellularLocation>
        <location evidence="2">Cytoplasm</location>
        <location evidence="2">Stress granule</location>
    </subcellularLocation>
    <text evidence="1">Localizes to cytoplasmic particles in stage VI oocytes and eggs.</text>
</comment>
<comment type="domain">
    <text evidence="1">The RGG repeats are required for interaction with ddx6/Xp54 and accumulation in ribonucleoprotein complexes.</text>
</comment>
<comment type="PTM">
    <text evidence="1">Phosphorylated.</text>
</comment>
<comment type="similarity">
    <text evidence="3">Belongs to the LSM14 family.</text>
</comment>